<dbReference type="EC" id="4.2.1.20"/>
<dbReference type="EMBL" id="AL513382">
    <property type="protein sequence ID" value="CAD08406.1"/>
    <property type="molecule type" value="Genomic_DNA"/>
</dbReference>
<dbReference type="EMBL" id="AE014613">
    <property type="protein sequence ID" value="AAO69265.1"/>
    <property type="molecule type" value="Genomic_DNA"/>
</dbReference>
<dbReference type="RefSeq" id="NP_455772.1">
    <property type="nucleotide sequence ID" value="NC_003198.1"/>
</dbReference>
<dbReference type="RefSeq" id="WP_000209485.1">
    <property type="nucleotide sequence ID" value="NZ_WSUR01000006.1"/>
</dbReference>
<dbReference type="SMR" id="P0A2K2"/>
<dbReference type="STRING" id="220341.gene:17585286"/>
<dbReference type="KEGG" id="stt:t1638"/>
<dbReference type="KEGG" id="sty:STY1325"/>
<dbReference type="PATRIC" id="fig|220341.7.peg.1332"/>
<dbReference type="eggNOG" id="COG0133">
    <property type="taxonomic scope" value="Bacteria"/>
</dbReference>
<dbReference type="HOGENOM" id="CLU_016734_3_1_6"/>
<dbReference type="OMA" id="PLTLCQN"/>
<dbReference type="OrthoDB" id="9766131at2"/>
<dbReference type="UniPathway" id="UPA00035">
    <property type="reaction ID" value="UER00044"/>
</dbReference>
<dbReference type="Proteomes" id="UP000000541">
    <property type="component" value="Chromosome"/>
</dbReference>
<dbReference type="Proteomes" id="UP000002670">
    <property type="component" value="Chromosome"/>
</dbReference>
<dbReference type="GO" id="GO:0005737">
    <property type="term" value="C:cytoplasm"/>
    <property type="evidence" value="ECO:0007669"/>
    <property type="project" value="TreeGrafter"/>
</dbReference>
<dbReference type="GO" id="GO:0004834">
    <property type="term" value="F:tryptophan synthase activity"/>
    <property type="evidence" value="ECO:0007669"/>
    <property type="project" value="UniProtKB-UniRule"/>
</dbReference>
<dbReference type="CDD" id="cd06446">
    <property type="entry name" value="Trp-synth_B"/>
    <property type="match status" value="1"/>
</dbReference>
<dbReference type="FunFam" id="3.40.50.1100:FF:000001">
    <property type="entry name" value="Tryptophan synthase beta chain"/>
    <property type="match status" value="1"/>
</dbReference>
<dbReference type="FunFam" id="3.40.50.1100:FF:000004">
    <property type="entry name" value="Tryptophan synthase beta chain"/>
    <property type="match status" value="1"/>
</dbReference>
<dbReference type="Gene3D" id="3.40.50.1100">
    <property type="match status" value="2"/>
</dbReference>
<dbReference type="HAMAP" id="MF_00133">
    <property type="entry name" value="Trp_synth_beta"/>
    <property type="match status" value="1"/>
</dbReference>
<dbReference type="InterPro" id="IPR006653">
    <property type="entry name" value="Trp_synth_b_CS"/>
</dbReference>
<dbReference type="InterPro" id="IPR006654">
    <property type="entry name" value="Trp_synth_beta"/>
</dbReference>
<dbReference type="InterPro" id="IPR023026">
    <property type="entry name" value="Trp_synth_beta/beta-like"/>
</dbReference>
<dbReference type="InterPro" id="IPR001926">
    <property type="entry name" value="TrpB-like_PALP"/>
</dbReference>
<dbReference type="InterPro" id="IPR036052">
    <property type="entry name" value="TrpB-like_PALP_sf"/>
</dbReference>
<dbReference type="NCBIfam" id="TIGR00263">
    <property type="entry name" value="trpB"/>
    <property type="match status" value="1"/>
</dbReference>
<dbReference type="PANTHER" id="PTHR48077:SF3">
    <property type="entry name" value="TRYPTOPHAN SYNTHASE"/>
    <property type="match status" value="1"/>
</dbReference>
<dbReference type="PANTHER" id="PTHR48077">
    <property type="entry name" value="TRYPTOPHAN SYNTHASE-RELATED"/>
    <property type="match status" value="1"/>
</dbReference>
<dbReference type="Pfam" id="PF00291">
    <property type="entry name" value="PALP"/>
    <property type="match status" value="1"/>
</dbReference>
<dbReference type="PIRSF" id="PIRSF001413">
    <property type="entry name" value="Trp_syn_beta"/>
    <property type="match status" value="1"/>
</dbReference>
<dbReference type="SUPFAM" id="SSF53686">
    <property type="entry name" value="Tryptophan synthase beta subunit-like PLP-dependent enzymes"/>
    <property type="match status" value="1"/>
</dbReference>
<dbReference type="PROSITE" id="PS00168">
    <property type="entry name" value="TRP_SYNTHASE_BETA"/>
    <property type="match status" value="1"/>
</dbReference>
<accession>P0A2K2</accession>
<accession>P00933</accession>
<accession>Q56141</accession>
<keyword id="KW-0028">Amino-acid biosynthesis</keyword>
<keyword id="KW-0057">Aromatic amino acid biosynthesis</keyword>
<keyword id="KW-0456">Lyase</keyword>
<keyword id="KW-0663">Pyridoxal phosphate</keyword>
<keyword id="KW-0822">Tryptophan biosynthesis</keyword>
<sequence>MTTLLNPYFGEFGGMYVPQILMPALNQLEEAFVSAQKDPEFQAQFADLLKNYAGRPTALTKCQNITAGTRTTLYLKREDLLHGGAHKTNQVLGQALLAKRMGKSEIIAETGAGQHGVASALASALLGLKCRIYMGAKDVERQSPNVFRMRLMGAEVIPVHSGSATLKDACNEALRDWSGSYETAHYMLGTAAGPHPYPTIVREFQRMIGEETKAQILDKEGRLPDAVIACVGGGSNAIGMFADFINDTSVGLIGVEPGGHGIETGEHGAPLKHGRVGIYFGMKAPMMQTADGQIEESYSISAGLDFPSVGPQHAYLNSIGRADYVSITDDEALEAFKTLCRHEGIIPALESSHALAHALKMMREQPEKEQLLVVNLSGRGDKDIFTVHDILKARGEI</sequence>
<name>TRPB_SALTI</name>
<protein>
    <recommendedName>
        <fullName>Tryptophan synthase beta chain</fullName>
        <ecNumber>4.2.1.20</ecNumber>
    </recommendedName>
</protein>
<evidence type="ECO:0000250" key="1"/>
<evidence type="ECO:0000305" key="2"/>
<comment type="function">
    <text evidence="1">The beta subunit is responsible for the synthesis of L-tryptophan from indole and L-serine.</text>
</comment>
<comment type="catalytic activity">
    <reaction>
        <text>(1S,2R)-1-C-(indol-3-yl)glycerol 3-phosphate + L-serine = D-glyceraldehyde 3-phosphate + L-tryptophan + H2O</text>
        <dbReference type="Rhea" id="RHEA:10532"/>
        <dbReference type="ChEBI" id="CHEBI:15377"/>
        <dbReference type="ChEBI" id="CHEBI:33384"/>
        <dbReference type="ChEBI" id="CHEBI:57912"/>
        <dbReference type="ChEBI" id="CHEBI:58866"/>
        <dbReference type="ChEBI" id="CHEBI:59776"/>
        <dbReference type="EC" id="4.2.1.20"/>
    </reaction>
</comment>
<comment type="cofactor">
    <cofactor evidence="1">
        <name>pyridoxal 5'-phosphate</name>
        <dbReference type="ChEBI" id="CHEBI:597326"/>
    </cofactor>
</comment>
<comment type="pathway">
    <text>Amino-acid biosynthesis; L-tryptophan biosynthesis; L-tryptophan from chorismate: step 5/5.</text>
</comment>
<comment type="subunit">
    <text evidence="1">Tetramer of two alpha and two beta chains.</text>
</comment>
<comment type="similarity">
    <text evidence="2">Belongs to the TrpB family.</text>
</comment>
<organism>
    <name type="scientific">Salmonella typhi</name>
    <dbReference type="NCBI Taxonomy" id="90370"/>
    <lineage>
        <taxon>Bacteria</taxon>
        <taxon>Pseudomonadati</taxon>
        <taxon>Pseudomonadota</taxon>
        <taxon>Gammaproteobacteria</taxon>
        <taxon>Enterobacterales</taxon>
        <taxon>Enterobacteriaceae</taxon>
        <taxon>Salmonella</taxon>
    </lineage>
</organism>
<proteinExistence type="inferred from homology"/>
<feature type="initiator methionine" description="Removed" evidence="1">
    <location>
        <position position="1"/>
    </location>
</feature>
<feature type="chain" id="PRO_0000098993" description="Tryptophan synthase beta chain">
    <location>
        <begin position="2"/>
        <end position="397"/>
    </location>
</feature>
<feature type="modified residue" description="N6-(pyridoxal phosphate)lysine" evidence="1">
    <location>
        <position position="87"/>
    </location>
</feature>
<reference key="1">
    <citation type="journal article" date="2001" name="Nature">
        <title>Complete genome sequence of a multiple drug resistant Salmonella enterica serovar Typhi CT18.</title>
        <authorList>
            <person name="Parkhill J."/>
            <person name="Dougan G."/>
            <person name="James K.D."/>
            <person name="Thomson N.R."/>
            <person name="Pickard D."/>
            <person name="Wain J."/>
            <person name="Churcher C.M."/>
            <person name="Mungall K.L."/>
            <person name="Bentley S.D."/>
            <person name="Holden M.T.G."/>
            <person name="Sebaihia M."/>
            <person name="Baker S."/>
            <person name="Basham D."/>
            <person name="Brooks K."/>
            <person name="Chillingworth T."/>
            <person name="Connerton P."/>
            <person name="Cronin A."/>
            <person name="Davis P."/>
            <person name="Davies R.M."/>
            <person name="Dowd L."/>
            <person name="White N."/>
            <person name="Farrar J."/>
            <person name="Feltwell T."/>
            <person name="Hamlin N."/>
            <person name="Haque A."/>
            <person name="Hien T.T."/>
            <person name="Holroyd S."/>
            <person name="Jagels K."/>
            <person name="Krogh A."/>
            <person name="Larsen T.S."/>
            <person name="Leather S."/>
            <person name="Moule S."/>
            <person name="O'Gaora P."/>
            <person name="Parry C."/>
            <person name="Quail M.A."/>
            <person name="Rutherford K.M."/>
            <person name="Simmonds M."/>
            <person name="Skelton J."/>
            <person name="Stevens K."/>
            <person name="Whitehead S."/>
            <person name="Barrell B.G."/>
        </authorList>
    </citation>
    <scope>NUCLEOTIDE SEQUENCE [LARGE SCALE GENOMIC DNA]</scope>
    <source>
        <strain>CT18</strain>
    </source>
</reference>
<reference key="2">
    <citation type="journal article" date="2003" name="J. Bacteriol.">
        <title>Comparative genomics of Salmonella enterica serovar Typhi strains Ty2 and CT18.</title>
        <authorList>
            <person name="Deng W."/>
            <person name="Liou S.-R."/>
            <person name="Plunkett G. III"/>
            <person name="Mayhew G.F."/>
            <person name="Rose D.J."/>
            <person name="Burland V."/>
            <person name="Kodoyianni V."/>
            <person name="Schwartz D.C."/>
            <person name="Blattner F.R."/>
        </authorList>
    </citation>
    <scope>NUCLEOTIDE SEQUENCE [LARGE SCALE GENOMIC DNA]</scope>
    <source>
        <strain>ATCC 700931 / Ty2</strain>
    </source>
</reference>
<gene>
    <name type="primary">trpB</name>
    <name type="ordered locus">STY1325</name>
    <name type="ordered locus">t1638</name>
</gene>